<protein>
    <recommendedName>
        <fullName evidence="1">Fumarate reductase subunit D</fullName>
    </recommendedName>
    <alternativeName>
        <fullName evidence="1">Quinol-fumarate reductase subunit D</fullName>
        <shortName evidence="1">QFR subunit D</shortName>
    </alternativeName>
</protein>
<name>FRDD_MYCBO</name>
<feature type="chain" id="PRO_0000196548" description="Fumarate reductase subunit D">
    <location>
        <begin position="1"/>
        <end position="125"/>
    </location>
</feature>
<feature type="transmembrane region" description="Helical" evidence="1">
    <location>
        <begin position="29"/>
        <end position="49"/>
    </location>
</feature>
<feature type="transmembrane region" description="Helical" evidence="1">
    <location>
        <begin position="64"/>
        <end position="84"/>
    </location>
</feature>
<feature type="transmembrane region" description="Helical" evidence="1">
    <location>
        <begin position="102"/>
        <end position="122"/>
    </location>
</feature>
<evidence type="ECO:0000255" key="1">
    <source>
        <dbReference type="HAMAP-Rule" id="MF_00709"/>
    </source>
</evidence>
<keyword id="KW-1003">Cell membrane</keyword>
<keyword id="KW-0472">Membrane</keyword>
<keyword id="KW-1185">Reference proteome</keyword>
<keyword id="KW-0812">Transmembrane</keyword>
<keyword id="KW-1133">Transmembrane helix</keyword>
<gene>
    <name evidence="1" type="primary">frdD</name>
    <name type="ordered locus">BQ2027_MB1580</name>
</gene>
<organism>
    <name type="scientific">Mycobacterium bovis (strain ATCC BAA-935 / AF2122/97)</name>
    <dbReference type="NCBI Taxonomy" id="233413"/>
    <lineage>
        <taxon>Bacteria</taxon>
        <taxon>Bacillati</taxon>
        <taxon>Actinomycetota</taxon>
        <taxon>Actinomycetes</taxon>
        <taxon>Mycobacteriales</taxon>
        <taxon>Mycobacteriaceae</taxon>
        <taxon>Mycobacterium</taxon>
        <taxon>Mycobacterium tuberculosis complex</taxon>
    </lineage>
</organism>
<sequence length="125" mass="13754">MTPSTSDARSRRRSAEPFLWLLFSAGGMVTALVAPVLLLLFGLAFPLGWLDAPDHGHLLAMVRNPITKLVVLVLVVLALFHAAHRFRFVLDHGLQLGRFDRVIALWCYGMAVLGSATAGWMLLTM</sequence>
<accession>P67644</accession>
<accession>A0A1R3Y0T6</accession>
<accession>Q10763</accession>
<accession>X2BII1</accession>
<comment type="function">
    <text evidence="1">Anchors the catalytic components of the fumarate reductase complex to the cell membrane, binds quinones.</text>
</comment>
<comment type="subunit">
    <text evidence="1">Part of an enzyme complex containing four subunits: a flavoprotein (FrdA), an iron-sulfur protein (FrdB), and two hydrophobic anchor proteins (FrdC and FrdD).</text>
</comment>
<comment type="subcellular location">
    <subcellularLocation>
        <location evidence="1">Cell membrane</location>
        <topology evidence="1">Multi-pass membrane protein</topology>
    </subcellularLocation>
</comment>
<comment type="similarity">
    <text evidence="1">Belongs to the FrdD family.</text>
</comment>
<reference key="1">
    <citation type="journal article" date="2003" name="Proc. Natl. Acad. Sci. U.S.A.">
        <title>The complete genome sequence of Mycobacterium bovis.</title>
        <authorList>
            <person name="Garnier T."/>
            <person name="Eiglmeier K."/>
            <person name="Camus J.-C."/>
            <person name="Medina N."/>
            <person name="Mansoor H."/>
            <person name="Pryor M."/>
            <person name="Duthoy S."/>
            <person name="Grondin S."/>
            <person name="Lacroix C."/>
            <person name="Monsempe C."/>
            <person name="Simon S."/>
            <person name="Harris B."/>
            <person name="Atkin R."/>
            <person name="Doggett J."/>
            <person name="Mayes R."/>
            <person name="Keating L."/>
            <person name="Wheeler P.R."/>
            <person name="Parkhill J."/>
            <person name="Barrell B.G."/>
            <person name="Cole S.T."/>
            <person name="Gordon S.V."/>
            <person name="Hewinson R.G."/>
        </authorList>
    </citation>
    <scope>NUCLEOTIDE SEQUENCE [LARGE SCALE GENOMIC DNA]</scope>
    <source>
        <strain>ATCC BAA-935 / AF2122/97</strain>
    </source>
</reference>
<reference key="2">
    <citation type="journal article" date="2017" name="Genome Announc.">
        <title>Updated reference genome sequence and annotation of Mycobacterium bovis AF2122/97.</title>
        <authorList>
            <person name="Malone K.M."/>
            <person name="Farrell D."/>
            <person name="Stuber T.P."/>
            <person name="Schubert O.T."/>
            <person name="Aebersold R."/>
            <person name="Robbe-Austerman S."/>
            <person name="Gordon S.V."/>
        </authorList>
    </citation>
    <scope>NUCLEOTIDE SEQUENCE [LARGE SCALE GENOMIC DNA]</scope>
    <scope>GENOME REANNOTATION</scope>
    <source>
        <strain>ATCC BAA-935 / AF2122/97</strain>
    </source>
</reference>
<proteinExistence type="inferred from homology"/>
<dbReference type="EMBL" id="LT708304">
    <property type="protein sequence ID" value="SIU00183.1"/>
    <property type="molecule type" value="Genomic_DNA"/>
</dbReference>
<dbReference type="RefSeq" id="NP_855232.1">
    <property type="nucleotide sequence ID" value="NC_002945.3"/>
</dbReference>
<dbReference type="RefSeq" id="WP_003407771.1">
    <property type="nucleotide sequence ID" value="NC_002945.4"/>
</dbReference>
<dbReference type="SMR" id="P67644"/>
<dbReference type="KEGG" id="mbo:BQ2027_MB1580"/>
<dbReference type="PATRIC" id="fig|233413.5.peg.1727"/>
<dbReference type="Proteomes" id="UP000001419">
    <property type="component" value="Chromosome"/>
</dbReference>
<dbReference type="GO" id="GO:0045283">
    <property type="term" value="C:fumarate reductase complex"/>
    <property type="evidence" value="ECO:0007669"/>
    <property type="project" value="UniProtKB-UniRule"/>
</dbReference>
<dbReference type="GO" id="GO:0005886">
    <property type="term" value="C:plasma membrane"/>
    <property type="evidence" value="ECO:0007669"/>
    <property type="project" value="UniProtKB-SubCell"/>
</dbReference>
<dbReference type="GO" id="GO:0000104">
    <property type="term" value="F:succinate dehydrogenase activity"/>
    <property type="evidence" value="ECO:0007669"/>
    <property type="project" value="UniProtKB-UniRule"/>
</dbReference>
<dbReference type="GO" id="GO:0006106">
    <property type="term" value="P:fumarate metabolic process"/>
    <property type="evidence" value="ECO:0007669"/>
    <property type="project" value="InterPro"/>
</dbReference>
<dbReference type="Gene3D" id="1.20.1300.10">
    <property type="entry name" value="Fumarate reductase/succinate dehydrogenase, transmembrane subunit"/>
    <property type="match status" value="1"/>
</dbReference>
<dbReference type="HAMAP" id="MF_00709">
    <property type="entry name" value="Fumarate_red_D"/>
    <property type="match status" value="1"/>
</dbReference>
<dbReference type="InterPro" id="IPR003418">
    <property type="entry name" value="Fumarate_red_D"/>
</dbReference>
<dbReference type="InterPro" id="IPR034804">
    <property type="entry name" value="SQR/QFR_C/D"/>
</dbReference>
<dbReference type="NCBIfam" id="NF003977">
    <property type="entry name" value="PRK05470.1-1"/>
    <property type="match status" value="1"/>
</dbReference>
<dbReference type="Pfam" id="PF02313">
    <property type="entry name" value="Fumarate_red_D"/>
    <property type="match status" value="1"/>
</dbReference>
<dbReference type="PIRSF" id="PIRSF000179">
    <property type="entry name" value="FrdD"/>
    <property type="match status" value="1"/>
</dbReference>
<dbReference type="SUPFAM" id="SSF81343">
    <property type="entry name" value="Fumarate reductase respiratory complex transmembrane subunits"/>
    <property type="match status" value="1"/>
</dbReference>